<reference key="1">
    <citation type="journal article" date="2005" name="Nature">
        <title>The genome sequence of the rice blast fungus Magnaporthe grisea.</title>
        <authorList>
            <person name="Dean R.A."/>
            <person name="Talbot N.J."/>
            <person name="Ebbole D.J."/>
            <person name="Farman M.L."/>
            <person name="Mitchell T.K."/>
            <person name="Orbach M.J."/>
            <person name="Thon M.R."/>
            <person name="Kulkarni R."/>
            <person name="Xu J.-R."/>
            <person name="Pan H."/>
            <person name="Read N.D."/>
            <person name="Lee Y.-H."/>
            <person name="Carbone I."/>
            <person name="Brown D."/>
            <person name="Oh Y.Y."/>
            <person name="Donofrio N."/>
            <person name="Jeong J.S."/>
            <person name="Soanes D.M."/>
            <person name="Djonovic S."/>
            <person name="Kolomiets E."/>
            <person name="Rehmeyer C."/>
            <person name="Li W."/>
            <person name="Harding M."/>
            <person name="Kim S."/>
            <person name="Lebrun M.-H."/>
            <person name="Bohnert H."/>
            <person name="Coughlan S."/>
            <person name="Butler J."/>
            <person name="Calvo S.E."/>
            <person name="Ma L.-J."/>
            <person name="Nicol R."/>
            <person name="Purcell S."/>
            <person name="Nusbaum C."/>
            <person name="Galagan J.E."/>
            <person name="Birren B.W."/>
        </authorList>
    </citation>
    <scope>NUCLEOTIDE SEQUENCE [LARGE SCALE GENOMIC DNA]</scope>
    <source>
        <strain>70-15 / ATCC MYA-4617 / FGSC 8958</strain>
    </source>
</reference>
<reference key="2">
    <citation type="journal article" date="2006" name="FEBS Lett.">
        <title>Divergent evolutionary lines of fungal cytochrome c peroxidases belonging to the superfamily of bacterial, fungal and plant heme peroxidases.</title>
        <authorList>
            <person name="Zamocky M."/>
            <person name="Dunand C."/>
        </authorList>
    </citation>
    <scope>CLASSIFICATION</scope>
</reference>
<feature type="chain" id="PRO_0000363408" description="Putative heme-binding peroxidase">
    <location>
        <begin position="1"/>
        <end position="300"/>
    </location>
</feature>
<feature type="region of interest" description="Disordered" evidence="4">
    <location>
        <begin position="44"/>
        <end position="64"/>
    </location>
</feature>
<feature type="region of interest" description="Disordered" evidence="4">
    <location>
        <begin position="116"/>
        <end position="135"/>
    </location>
</feature>
<feature type="compositionally biased region" description="Basic and acidic residues" evidence="4">
    <location>
        <begin position="116"/>
        <end position="126"/>
    </location>
</feature>
<feature type="active site" description="Proton acceptor" evidence="2 3">
    <location>
        <position position="39"/>
    </location>
</feature>
<feature type="active site" description="Tryptophan radical intermediate" evidence="1">
    <location>
        <position position="179"/>
    </location>
</feature>
<feature type="binding site" description="axial binding residue" evidence="2">
    <location>
        <position position="163"/>
    </location>
    <ligand>
        <name>heme b</name>
        <dbReference type="ChEBI" id="CHEBI:60344"/>
    </ligand>
    <ligandPart>
        <name>Fe</name>
        <dbReference type="ChEBI" id="CHEBI:18248"/>
    </ligandPart>
</feature>
<feature type="site" description="Transition state stabilizer" evidence="2">
    <location>
        <position position="35"/>
    </location>
</feature>
<evidence type="ECO:0000250" key="1"/>
<evidence type="ECO:0000255" key="2">
    <source>
        <dbReference type="PROSITE-ProRule" id="PRU00297"/>
    </source>
</evidence>
<evidence type="ECO:0000255" key="3">
    <source>
        <dbReference type="PROSITE-ProRule" id="PRU10012"/>
    </source>
</evidence>
<evidence type="ECO:0000256" key="4">
    <source>
        <dbReference type="SAM" id="MobiDB-lite"/>
    </source>
</evidence>
<evidence type="ECO:0000305" key="5"/>
<proteinExistence type="inferred from homology"/>
<keyword id="KW-0349">Heme</keyword>
<keyword id="KW-0408">Iron</keyword>
<keyword id="KW-0479">Metal-binding</keyword>
<keyword id="KW-0560">Oxidoreductase</keyword>
<keyword id="KW-0575">Peroxidase</keyword>
<keyword id="KW-1185">Reference proteome</keyword>
<sequence>MASKPGDFDAVRKDIVSLLDQPEYDDGSAGPVLVRLAWHSAGTYDKSTDTGGSNGAGMRYEAEGGDPANAGLQNARQFLEPVKARHPWITYADLRTLAGVVAVRAMGGPEIPWRAGRTDFADDSRVPPRGRLPDATQGAAHVRDIFYRMGFDDREIVALSGAHSLGRCHPANSGFEGKWVNNPTRFSNQYFRLLLSEDWREKTVAGTGLKQFVAVDEVTGDELMMLPTDLSLTSDPVFARWVKVYRDDQDLFFADFAKVFDKLMELGIKRDAEGKVINKENVEGGYVSAPKKQGKIASKL</sequence>
<name>CCPR2_PYRO7</name>
<organism>
    <name type="scientific">Pyricularia oryzae (strain 70-15 / ATCC MYA-4617 / FGSC 8958)</name>
    <name type="common">Rice blast fungus</name>
    <name type="synonym">Magnaporthe oryzae</name>
    <dbReference type="NCBI Taxonomy" id="242507"/>
    <lineage>
        <taxon>Eukaryota</taxon>
        <taxon>Fungi</taxon>
        <taxon>Dikarya</taxon>
        <taxon>Ascomycota</taxon>
        <taxon>Pezizomycotina</taxon>
        <taxon>Sordariomycetes</taxon>
        <taxon>Sordariomycetidae</taxon>
        <taxon>Magnaporthales</taxon>
        <taxon>Pyriculariaceae</taxon>
        <taxon>Pyricularia</taxon>
    </lineage>
</organism>
<gene>
    <name type="ORF">MGG_10368</name>
</gene>
<dbReference type="EC" id="1.11.1.-"/>
<dbReference type="EMBL" id="CM001236">
    <property type="protein sequence ID" value="EHA47036.1"/>
    <property type="molecule type" value="Genomic_DNA"/>
</dbReference>
<dbReference type="RefSeq" id="XP_003719403.1">
    <property type="nucleotide sequence ID" value="XM_003719355.1"/>
</dbReference>
<dbReference type="SMR" id="A4R606"/>
<dbReference type="FunCoup" id="A4R606">
    <property type="interactions" value="75"/>
</dbReference>
<dbReference type="STRING" id="242507.A4R606"/>
<dbReference type="PeroxiBase" id="2342">
    <property type="entry name" value="MgrCcP01"/>
</dbReference>
<dbReference type="EnsemblFungi" id="MGG_10368T0">
    <property type="protein sequence ID" value="MGG_10368T0"/>
    <property type="gene ID" value="MGG_10368"/>
</dbReference>
<dbReference type="GeneID" id="2681979"/>
<dbReference type="KEGG" id="mgr:MGG_10368"/>
<dbReference type="VEuPathDB" id="FungiDB:MGG_10368"/>
<dbReference type="eggNOG" id="ENOG502QR1E">
    <property type="taxonomic scope" value="Eukaryota"/>
</dbReference>
<dbReference type="HOGENOM" id="CLU_036959_0_1_1"/>
<dbReference type="InParanoid" id="A4R606"/>
<dbReference type="OMA" id="GAWVNNP"/>
<dbReference type="OrthoDB" id="2859658at2759"/>
<dbReference type="Proteomes" id="UP000009058">
    <property type="component" value="Chromosome 6"/>
</dbReference>
<dbReference type="GO" id="GO:0020037">
    <property type="term" value="F:heme binding"/>
    <property type="evidence" value="ECO:0007669"/>
    <property type="project" value="InterPro"/>
</dbReference>
<dbReference type="GO" id="GO:0046872">
    <property type="term" value="F:metal ion binding"/>
    <property type="evidence" value="ECO:0007669"/>
    <property type="project" value="UniProtKB-KW"/>
</dbReference>
<dbReference type="GO" id="GO:0004601">
    <property type="term" value="F:peroxidase activity"/>
    <property type="evidence" value="ECO:0007669"/>
    <property type="project" value="UniProtKB-KW"/>
</dbReference>
<dbReference type="GO" id="GO:0034599">
    <property type="term" value="P:cellular response to oxidative stress"/>
    <property type="evidence" value="ECO:0007669"/>
    <property type="project" value="InterPro"/>
</dbReference>
<dbReference type="GO" id="GO:0042744">
    <property type="term" value="P:hydrogen peroxide catabolic process"/>
    <property type="evidence" value="ECO:0007669"/>
    <property type="project" value="TreeGrafter"/>
</dbReference>
<dbReference type="GO" id="GO:0000302">
    <property type="term" value="P:response to reactive oxygen species"/>
    <property type="evidence" value="ECO:0007669"/>
    <property type="project" value="TreeGrafter"/>
</dbReference>
<dbReference type="CDD" id="cd00691">
    <property type="entry name" value="ascorbate_peroxidase"/>
    <property type="match status" value="1"/>
</dbReference>
<dbReference type="FunFam" id="1.10.420.10:FF:000009">
    <property type="entry name" value="Ascorbate peroxidase"/>
    <property type="match status" value="1"/>
</dbReference>
<dbReference type="FunFam" id="1.10.520.10:FF:000005">
    <property type="entry name" value="Cytochrome c peroxidase"/>
    <property type="match status" value="1"/>
</dbReference>
<dbReference type="Gene3D" id="1.10.520.10">
    <property type="match status" value="1"/>
</dbReference>
<dbReference type="Gene3D" id="1.10.420.10">
    <property type="entry name" value="Peroxidase, domain 2"/>
    <property type="match status" value="1"/>
</dbReference>
<dbReference type="InterPro" id="IPR044831">
    <property type="entry name" value="Ccp1-like"/>
</dbReference>
<dbReference type="InterPro" id="IPR002016">
    <property type="entry name" value="Haem_peroxidase"/>
</dbReference>
<dbReference type="InterPro" id="IPR010255">
    <property type="entry name" value="Haem_peroxidase_sf"/>
</dbReference>
<dbReference type="InterPro" id="IPR002207">
    <property type="entry name" value="Peroxidase_I"/>
</dbReference>
<dbReference type="InterPro" id="IPR019794">
    <property type="entry name" value="Peroxidases_AS"/>
</dbReference>
<dbReference type="InterPro" id="IPR019793">
    <property type="entry name" value="Peroxidases_heam-ligand_BS"/>
</dbReference>
<dbReference type="PANTHER" id="PTHR31356:SF36">
    <property type="entry name" value="L-ASCORBATE PEROXIDASE 3"/>
    <property type="match status" value="1"/>
</dbReference>
<dbReference type="PANTHER" id="PTHR31356">
    <property type="entry name" value="THYLAKOID LUMENAL 29 KDA PROTEIN, CHLOROPLASTIC-RELATED"/>
    <property type="match status" value="1"/>
</dbReference>
<dbReference type="Pfam" id="PF00141">
    <property type="entry name" value="peroxidase"/>
    <property type="match status" value="1"/>
</dbReference>
<dbReference type="PRINTS" id="PR00459">
    <property type="entry name" value="ASPEROXIDASE"/>
</dbReference>
<dbReference type="PRINTS" id="PR00458">
    <property type="entry name" value="PEROXIDASE"/>
</dbReference>
<dbReference type="SUPFAM" id="SSF48113">
    <property type="entry name" value="Heme-dependent peroxidases"/>
    <property type="match status" value="1"/>
</dbReference>
<dbReference type="PROSITE" id="PS00435">
    <property type="entry name" value="PEROXIDASE_1"/>
    <property type="match status" value="1"/>
</dbReference>
<dbReference type="PROSITE" id="PS00436">
    <property type="entry name" value="PEROXIDASE_2"/>
    <property type="match status" value="1"/>
</dbReference>
<dbReference type="PROSITE" id="PS50873">
    <property type="entry name" value="PEROXIDASE_4"/>
    <property type="match status" value="1"/>
</dbReference>
<accession>A4R606</accession>
<accession>G4NG79</accession>
<comment type="function">
    <text evidence="1">Destroys radicals which are normally produced within the cells and which are toxic to biological systems.</text>
</comment>
<comment type="cofactor">
    <cofactor evidence="2">
        <name>heme b</name>
        <dbReference type="ChEBI" id="CHEBI:60344"/>
    </cofactor>
    <text evidence="2">Binds 1 heme b (iron(II)-protoporphyrin IX) group per subunit.</text>
</comment>
<comment type="similarity">
    <text evidence="5">Belongs to the peroxidase family. Cytochrome c peroxidase subfamily.</text>
</comment>
<protein>
    <recommendedName>
        <fullName>Putative heme-binding peroxidase</fullName>
        <ecNumber>1.11.1.-</ecNumber>
    </recommendedName>
</protein>